<dbReference type="EMBL" id="AE017125">
    <property type="protein sequence ID" value="AAP77261.1"/>
    <property type="molecule type" value="Genomic_DNA"/>
</dbReference>
<dbReference type="RefSeq" id="WP_011115506.1">
    <property type="nucleotide sequence ID" value="NC_004917.1"/>
</dbReference>
<dbReference type="SMR" id="Q7VIE2"/>
<dbReference type="STRING" id="235279.HH_0664"/>
<dbReference type="KEGG" id="hhe:HH_0664"/>
<dbReference type="eggNOG" id="COG0576">
    <property type="taxonomic scope" value="Bacteria"/>
</dbReference>
<dbReference type="HOGENOM" id="CLU_057217_5_2_7"/>
<dbReference type="Proteomes" id="UP000002495">
    <property type="component" value="Chromosome"/>
</dbReference>
<dbReference type="GO" id="GO:0005829">
    <property type="term" value="C:cytosol"/>
    <property type="evidence" value="ECO:0007669"/>
    <property type="project" value="TreeGrafter"/>
</dbReference>
<dbReference type="GO" id="GO:0000774">
    <property type="term" value="F:adenyl-nucleotide exchange factor activity"/>
    <property type="evidence" value="ECO:0007669"/>
    <property type="project" value="InterPro"/>
</dbReference>
<dbReference type="GO" id="GO:0042803">
    <property type="term" value="F:protein homodimerization activity"/>
    <property type="evidence" value="ECO:0007669"/>
    <property type="project" value="InterPro"/>
</dbReference>
<dbReference type="GO" id="GO:0051087">
    <property type="term" value="F:protein-folding chaperone binding"/>
    <property type="evidence" value="ECO:0007669"/>
    <property type="project" value="InterPro"/>
</dbReference>
<dbReference type="GO" id="GO:0051082">
    <property type="term" value="F:unfolded protein binding"/>
    <property type="evidence" value="ECO:0007669"/>
    <property type="project" value="TreeGrafter"/>
</dbReference>
<dbReference type="GO" id="GO:0006457">
    <property type="term" value="P:protein folding"/>
    <property type="evidence" value="ECO:0007669"/>
    <property type="project" value="InterPro"/>
</dbReference>
<dbReference type="CDD" id="cd00446">
    <property type="entry name" value="GrpE"/>
    <property type="match status" value="1"/>
</dbReference>
<dbReference type="Gene3D" id="3.90.20.20">
    <property type="match status" value="1"/>
</dbReference>
<dbReference type="Gene3D" id="2.30.22.10">
    <property type="entry name" value="Head domain of nucleotide exchange factor GrpE"/>
    <property type="match status" value="1"/>
</dbReference>
<dbReference type="HAMAP" id="MF_01151">
    <property type="entry name" value="GrpE"/>
    <property type="match status" value="1"/>
</dbReference>
<dbReference type="InterPro" id="IPR000740">
    <property type="entry name" value="GrpE"/>
</dbReference>
<dbReference type="InterPro" id="IPR013805">
    <property type="entry name" value="GrpE_coiled_coil"/>
</dbReference>
<dbReference type="InterPro" id="IPR009012">
    <property type="entry name" value="GrpE_head"/>
</dbReference>
<dbReference type="NCBIfam" id="NF010738">
    <property type="entry name" value="PRK14140.1"/>
    <property type="match status" value="1"/>
</dbReference>
<dbReference type="NCBIfam" id="NF010747">
    <property type="entry name" value="PRK14149.1"/>
    <property type="match status" value="1"/>
</dbReference>
<dbReference type="PANTHER" id="PTHR21237">
    <property type="entry name" value="GRPE PROTEIN"/>
    <property type="match status" value="1"/>
</dbReference>
<dbReference type="PANTHER" id="PTHR21237:SF23">
    <property type="entry name" value="GRPE PROTEIN HOMOLOG, MITOCHONDRIAL"/>
    <property type="match status" value="1"/>
</dbReference>
<dbReference type="Pfam" id="PF01025">
    <property type="entry name" value="GrpE"/>
    <property type="match status" value="1"/>
</dbReference>
<dbReference type="PRINTS" id="PR00773">
    <property type="entry name" value="GRPEPROTEIN"/>
</dbReference>
<dbReference type="SUPFAM" id="SSF58014">
    <property type="entry name" value="Coiled-coil domain of nucleotide exchange factor GrpE"/>
    <property type="match status" value="1"/>
</dbReference>
<dbReference type="SUPFAM" id="SSF51064">
    <property type="entry name" value="Head domain of nucleotide exchange factor GrpE"/>
    <property type="match status" value="1"/>
</dbReference>
<reference key="1">
    <citation type="journal article" date="2003" name="Proc. Natl. Acad. Sci. U.S.A.">
        <title>The complete genome sequence of the carcinogenic bacterium Helicobacter hepaticus.</title>
        <authorList>
            <person name="Suerbaum S."/>
            <person name="Josenhans C."/>
            <person name="Sterzenbach T."/>
            <person name="Drescher B."/>
            <person name="Brandt P."/>
            <person name="Bell M."/>
            <person name="Droege M."/>
            <person name="Fartmann B."/>
            <person name="Fischer H.-P."/>
            <person name="Ge Z."/>
            <person name="Hoerster A."/>
            <person name="Holland R."/>
            <person name="Klein K."/>
            <person name="Koenig J."/>
            <person name="Macko L."/>
            <person name="Mendz G.L."/>
            <person name="Nyakatura G."/>
            <person name="Schauer D.B."/>
            <person name="Shen Z."/>
            <person name="Weber J."/>
            <person name="Frosch M."/>
            <person name="Fox J.G."/>
        </authorList>
    </citation>
    <scope>NUCLEOTIDE SEQUENCE [LARGE SCALE GENOMIC DNA]</scope>
    <source>
        <strain>ATCC 51449 / 3B1</strain>
    </source>
</reference>
<proteinExistence type="inferred from homology"/>
<feature type="chain" id="PRO_0000113794" description="Protein GrpE">
    <location>
        <begin position="1"/>
        <end position="185"/>
    </location>
</feature>
<feature type="region of interest" description="Disordered" evidence="2">
    <location>
        <begin position="1"/>
        <end position="37"/>
    </location>
</feature>
<feature type="compositionally biased region" description="Polar residues" evidence="2">
    <location>
        <begin position="28"/>
        <end position="37"/>
    </location>
</feature>
<evidence type="ECO:0000255" key="1">
    <source>
        <dbReference type="HAMAP-Rule" id="MF_01151"/>
    </source>
</evidence>
<evidence type="ECO:0000256" key="2">
    <source>
        <dbReference type="SAM" id="MobiDB-lite"/>
    </source>
</evidence>
<accession>Q7VIE2</accession>
<organism>
    <name type="scientific">Helicobacter hepaticus (strain ATCC 51449 / 3B1)</name>
    <dbReference type="NCBI Taxonomy" id="235279"/>
    <lineage>
        <taxon>Bacteria</taxon>
        <taxon>Pseudomonadati</taxon>
        <taxon>Campylobacterota</taxon>
        <taxon>Epsilonproteobacteria</taxon>
        <taxon>Campylobacterales</taxon>
        <taxon>Helicobacteraceae</taxon>
        <taxon>Helicobacter</taxon>
    </lineage>
</organism>
<comment type="function">
    <text evidence="1">Participates actively in the response to hyperosmotic and heat shock by preventing the aggregation of stress-denatured proteins, in association with DnaK and GrpE. It is the nucleotide exchange factor for DnaK and may function as a thermosensor. Unfolded proteins bind initially to DnaJ; upon interaction with the DnaJ-bound protein, DnaK hydrolyzes its bound ATP, resulting in the formation of a stable complex. GrpE releases ADP from DnaK; ATP binding to DnaK triggers the release of the substrate protein, thus completing the reaction cycle. Several rounds of ATP-dependent interactions between DnaJ, DnaK and GrpE are required for fully efficient folding.</text>
</comment>
<comment type="subunit">
    <text evidence="1">Homodimer.</text>
</comment>
<comment type="subcellular location">
    <subcellularLocation>
        <location evidence="1">Cytoplasm</location>
    </subcellularLocation>
</comment>
<comment type="similarity">
    <text evidence="1">Belongs to the GrpE family.</text>
</comment>
<keyword id="KW-0143">Chaperone</keyword>
<keyword id="KW-0963">Cytoplasm</keyword>
<keyword id="KW-1185">Reference proteome</keyword>
<keyword id="KW-0346">Stress response</keyword>
<protein>
    <recommendedName>
        <fullName evidence="1">Protein GrpE</fullName>
    </recommendedName>
    <alternativeName>
        <fullName evidence="1">HSP-70 cofactor</fullName>
    </alternativeName>
</protein>
<gene>
    <name evidence="1" type="primary">grpE</name>
    <name type="ordered locus">HH_0664</name>
</gene>
<sequence length="185" mass="21327">MEEQEEKQYNQNIQDNEEGTQMREELQESTSAQQTLQEQEIDYQAKYLELKDQYVRAFADFENTKKRLERDKNQSLEYAYERIMNDLLPVLDTLEKALESAQSNPEAGAIAQGLQLTLEGFLKVLSKHGVEVIATDGEFDPNLHECLMQVPDANKNDGEILQTLQKGFVYKHRVLRPSMVSVVKN</sequence>
<name>GRPE_HELHP</name>